<keyword id="KW-0963">Cytoplasm</keyword>
<keyword id="KW-0378">Hydrolase</keyword>
<keyword id="KW-0479">Metal-binding</keyword>
<keyword id="KW-0540">Nuclease</keyword>
<keyword id="KW-0539">Nucleus</keyword>
<keyword id="KW-1185">Reference proteome</keyword>
<comment type="function">
    <text evidence="1 4">Transposase-derived protein that may have nuclease activity (Potential). Does not have transposase activity (By similarity).</text>
</comment>
<comment type="cofactor">
    <cofactor evidence="4">
        <name>a divalent metal cation</name>
        <dbReference type="ChEBI" id="CHEBI:60240"/>
    </cofactor>
</comment>
<comment type="subunit">
    <text evidence="1">Interacts with NAIF1.</text>
</comment>
<comment type="subcellular location">
    <subcellularLocation>
        <location evidence="1">Nucleus</location>
    </subcellularLocation>
    <subcellularLocation>
        <location evidence="1">Cytoplasm</location>
    </subcellularLocation>
    <text evidence="1">Interaction with NAIF1 promotes translocation to the nucleus.</text>
</comment>
<comment type="tissue specificity">
    <text evidence="3">Detected in brain.</text>
</comment>
<comment type="similarity">
    <text evidence="4">Belongs to the HARBI1 family.</text>
</comment>
<gene>
    <name type="primary">HARBI1</name>
</gene>
<accession>Q17QR8</accession>
<protein>
    <recommendedName>
        <fullName>Putative nuclease HARBI1</fullName>
        <ecNumber>3.1.-.-</ecNumber>
    </recommendedName>
    <alternativeName>
        <fullName>Harbinger transposase-derived nuclease</fullName>
    </alternativeName>
</protein>
<reference key="1">
    <citation type="submission" date="2006-06" db="EMBL/GenBank/DDBJ databases">
        <authorList>
            <consortium name="NIH - Mammalian Gene Collection (MGC) project"/>
        </authorList>
    </citation>
    <scope>NUCLEOTIDE SEQUENCE [LARGE SCALE MRNA]</scope>
    <source>
        <strain>Hereford</strain>
        <tissue>Thalamus</tissue>
    </source>
</reference>
<reference key="2">
    <citation type="journal article" date="2004" name="DNA Cell Biol.">
        <title>Harbinger transposons and an ancient HARBI1 gene derived from a transposase.</title>
        <authorList>
            <person name="Kapitonov V.V."/>
            <person name="Jurka J."/>
        </authorList>
    </citation>
    <scope>TISSUE SPECIFICITY</scope>
</reference>
<name>HARB1_BOVIN</name>
<organism>
    <name type="scientific">Bos taurus</name>
    <name type="common">Bovine</name>
    <dbReference type="NCBI Taxonomy" id="9913"/>
    <lineage>
        <taxon>Eukaryota</taxon>
        <taxon>Metazoa</taxon>
        <taxon>Chordata</taxon>
        <taxon>Craniata</taxon>
        <taxon>Vertebrata</taxon>
        <taxon>Euteleostomi</taxon>
        <taxon>Mammalia</taxon>
        <taxon>Eutheria</taxon>
        <taxon>Laurasiatheria</taxon>
        <taxon>Artiodactyla</taxon>
        <taxon>Ruminantia</taxon>
        <taxon>Pecora</taxon>
        <taxon>Bovidae</taxon>
        <taxon>Bovinae</taxon>
        <taxon>Bos</taxon>
    </lineage>
</organism>
<proteinExistence type="evidence at transcript level"/>
<feature type="chain" id="PRO_0000263613" description="Putative nuclease HARBI1">
    <location>
        <begin position="1"/>
        <end position="349"/>
    </location>
</feature>
<feature type="domain" description="DDE Tnp4" evidence="2">
    <location>
        <begin position="148"/>
        <end position="300"/>
    </location>
</feature>
<feature type="binding site" evidence="2">
    <location>
        <position position="149"/>
    </location>
    <ligand>
        <name>a divalent metal cation</name>
        <dbReference type="ChEBI" id="CHEBI:60240"/>
    </ligand>
</feature>
<feature type="binding site" evidence="2">
    <location>
        <position position="199"/>
    </location>
    <ligand>
        <name>a divalent metal cation</name>
        <dbReference type="ChEBI" id="CHEBI:60240"/>
    </ligand>
</feature>
<feature type="binding site" evidence="2">
    <location>
        <position position="225"/>
    </location>
    <ligand>
        <name>a divalent metal cation</name>
        <dbReference type="ChEBI" id="CHEBI:60240"/>
    </ligand>
</feature>
<feature type="binding site" evidence="2">
    <location>
        <position position="261"/>
    </location>
    <ligand>
        <name>a divalent metal cation</name>
        <dbReference type="ChEBI" id="CHEBI:60240"/>
    </ligand>
</feature>
<sequence length="349" mass="39003">MAIPITVLDCDLLLYGRGHRTLDRFKLDDVTDEYLMSMYGFPRQFIYYLVELLGASLSRPTQRSRAISPETQILAALGFYTSGSFQTRMGDAIGISQASMSRCVANVTEALVERASQFIHFPADEASVQALKDEFYGLAGIPGVIGVVDCMHVAIKAPNAEDLSYVNRKGLHSLNCLMVCDIRGALMTVETSWPGSLQDCVVLQQSSLSSQFEAGMHKESWLLGDSSFFLRTWLMTPLHIPETPAEYRYNMAHSATHSVIEKTFRTLCSRFRCLDGSKGALQYSPEKSSHIILACCVLHNISLEHGMDVWSSPVTGPVEQPPEEEYEHMESLDLEADRIRQELMLTHFS</sequence>
<evidence type="ECO:0000250" key="1"/>
<evidence type="ECO:0000255" key="2"/>
<evidence type="ECO:0000269" key="3">
    <source>
    </source>
</evidence>
<evidence type="ECO:0000305" key="4"/>
<dbReference type="EC" id="3.1.-.-"/>
<dbReference type="EMBL" id="BC118217">
    <property type="protein sequence ID" value="AAI18218.1"/>
    <property type="molecule type" value="mRNA"/>
</dbReference>
<dbReference type="RefSeq" id="NP_001069136.1">
    <property type="nucleotide sequence ID" value="NM_001075668.1"/>
</dbReference>
<dbReference type="RefSeq" id="XP_005216510.1">
    <property type="nucleotide sequence ID" value="XM_005216453.5"/>
</dbReference>
<dbReference type="RefSeq" id="XP_005216511.1">
    <property type="nucleotide sequence ID" value="XM_005216454.5"/>
</dbReference>
<dbReference type="FunCoup" id="Q17QR8">
    <property type="interactions" value="482"/>
</dbReference>
<dbReference type="STRING" id="9913.ENSBTAP00000006085"/>
<dbReference type="PaxDb" id="9913-ENSBTAP00000006085"/>
<dbReference type="Ensembl" id="ENSBTAT00000006085.4">
    <property type="protein sequence ID" value="ENSBTAP00000006085.2"/>
    <property type="gene ID" value="ENSBTAG00000004639.4"/>
</dbReference>
<dbReference type="GeneID" id="514442"/>
<dbReference type="KEGG" id="bta:514442"/>
<dbReference type="CTD" id="283254"/>
<dbReference type="VEuPathDB" id="HostDB:ENSBTAG00000004639"/>
<dbReference type="VGNC" id="VGNC:29752">
    <property type="gene designation" value="HARBI1"/>
</dbReference>
<dbReference type="eggNOG" id="KOG4585">
    <property type="taxonomic scope" value="Eukaryota"/>
</dbReference>
<dbReference type="GeneTree" id="ENSGT00940000154348"/>
<dbReference type="HOGENOM" id="CLU_018552_13_0_1"/>
<dbReference type="InParanoid" id="Q17QR8"/>
<dbReference type="OMA" id="AEPNCKV"/>
<dbReference type="OrthoDB" id="10062286at2759"/>
<dbReference type="TreeFam" id="TF327972"/>
<dbReference type="Proteomes" id="UP000009136">
    <property type="component" value="Chromosome 15"/>
</dbReference>
<dbReference type="Bgee" id="ENSBTAG00000004639">
    <property type="expression patterns" value="Expressed in caput epididymis and 105 other cell types or tissues"/>
</dbReference>
<dbReference type="GO" id="GO:0034451">
    <property type="term" value="C:centriolar satellite"/>
    <property type="evidence" value="ECO:0007669"/>
    <property type="project" value="Ensembl"/>
</dbReference>
<dbReference type="GO" id="GO:0005829">
    <property type="term" value="C:cytosol"/>
    <property type="evidence" value="ECO:0007669"/>
    <property type="project" value="Ensembl"/>
</dbReference>
<dbReference type="GO" id="GO:0005634">
    <property type="term" value="C:nucleus"/>
    <property type="evidence" value="ECO:0007669"/>
    <property type="project" value="UniProtKB-SubCell"/>
</dbReference>
<dbReference type="GO" id="GO:0005886">
    <property type="term" value="C:plasma membrane"/>
    <property type="evidence" value="ECO:0007669"/>
    <property type="project" value="Ensembl"/>
</dbReference>
<dbReference type="GO" id="GO:0046872">
    <property type="term" value="F:metal ion binding"/>
    <property type="evidence" value="ECO:0007669"/>
    <property type="project" value="UniProtKB-KW"/>
</dbReference>
<dbReference type="GO" id="GO:0004518">
    <property type="term" value="F:nuclease activity"/>
    <property type="evidence" value="ECO:0007669"/>
    <property type="project" value="UniProtKB-KW"/>
</dbReference>
<dbReference type="InterPro" id="IPR045249">
    <property type="entry name" value="HARBI1-like"/>
</dbReference>
<dbReference type="InterPro" id="IPR026103">
    <property type="entry name" value="HARBI1_animal"/>
</dbReference>
<dbReference type="InterPro" id="IPR027806">
    <property type="entry name" value="HARBI1_dom"/>
</dbReference>
<dbReference type="PANTHER" id="PTHR22930">
    <property type="match status" value="1"/>
</dbReference>
<dbReference type="PANTHER" id="PTHR22930:SF253">
    <property type="entry name" value="NUCLEASE HARBI1-RELATED"/>
    <property type="match status" value="1"/>
</dbReference>
<dbReference type="Pfam" id="PF13359">
    <property type="entry name" value="DDE_Tnp_4"/>
    <property type="match status" value="1"/>
</dbReference>
<dbReference type="PRINTS" id="PR02086">
    <property type="entry name" value="PUTNUCHARBI1"/>
</dbReference>